<proteinExistence type="inferred from homology"/>
<accession>A7ZSJ2</accession>
<keyword id="KW-1185">Reference proteome</keyword>
<keyword id="KW-0687">Ribonucleoprotein</keyword>
<keyword id="KW-0689">Ribosomal protein</keyword>
<keyword id="KW-0694">RNA-binding</keyword>
<keyword id="KW-0699">rRNA-binding</keyword>
<feature type="chain" id="PRO_1000086003" description="Small ribosomal subunit protein uS5">
    <location>
        <begin position="1"/>
        <end position="167"/>
    </location>
</feature>
<feature type="domain" description="S5 DRBM" evidence="1">
    <location>
        <begin position="11"/>
        <end position="74"/>
    </location>
</feature>
<organism>
    <name type="scientific">Escherichia coli O139:H28 (strain E24377A / ETEC)</name>
    <dbReference type="NCBI Taxonomy" id="331111"/>
    <lineage>
        <taxon>Bacteria</taxon>
        <taxon>Pseudomonadati</taxon>
        <taxon>Pseudomonadota</taxon>
        <taxon>Gammaproteobacteria</taxon>
        <taxon>Enterobacterales</taxon>
        <taxon>Enterobacteriaceae</taxon>
        <taxon>Escherichia</taxon>
    </lineage>
</organism>
<protein>
    <recommendedName>
        <fullName evidence="1">Small ribosomal subunit protein uS5</fullName>
    </recommendedName>
    <alternativeName>
        <fullName evidence="2">30S ribosomal protein S5</fullName>
    </alternativeName>
</protein>
<comment type="function">
    <text evidence="1">With S4 and S12 plays an important role in translational accuracy.</text>
</comment>
<comment type="function">
    <text evidence="1">Located at the back of the 30S subunit body where it stabilizes the conformation of the head with respect to the body.</text>
</comment>
<comment type="subunit">
    <text evidence="1">Part of the 30S ribosomal subunit. Contacts proteins S4 and S8.</text>
</comment>
<comment type="domain">
    <text>The N-terminal domain interacts with the head of the 30S subunit; the C-terminal domain interacts with the body and contacts protein S4. The interaction surface between S4 and S5 is involved in control of translational fidelity.</text>
</comment>
<comment type="similarity">
    <text evidence="1">Belongs to the universal ribosomal protein uS5 family.</text>
</comment>
<sequence length="167" mass="17603">MAHIEKQAGELQEKLIAVNRVSKTVKGGRIFSFTALTVVGDGNGRVGFGYGKAREVPAAIQKAMEKARRNMINVALNNGTLQHPVKGVHTGSRVFMQPASEGTGIIAGGAMRAVLEVAGVHNVLAKAYGSTNPINVVRATIDGLENMNSPEMVAAKRGKSVEEILGK</sequence>
<evidence type="ECO:0000255" key="1">
    <source>
        <dbReference type="HAMAP-Rule" id="MF_01307"/>
    </source>
</evidence>
<evidence type="ECO:0000305" key="2"/>
<dbReference type="EMBL" id="CP000800">
    <property type="protein sequence ID" value="ABV17411.1"/>
    <property type="molecule type" value="Genomic_DNA"/>
</dbReference>
<dbReference type="RefSeq" id="WP_000940121.1">
    <property type="nucleotide sequence ID" value="NC_009801.1"/>
</dbReference>
<dbReference type="SMR" id="A7ZSJ2"/>
<dbReference type="GeneID" id="93778684"/>
<dbReference type="KEGG" id="ecw:EcE24377A_3786"/>
<dbReference type="HOGENOM" id="CLU_065898_2_2_6"/>
<dbReference type="Proteomes" id="UP000001122">
    <property type="component" value="Chromosome"/>
</dbReference>
<dbReference type="GO" id="GO:0015935">
    <property type="term" value="C:small ribosomal subunit"/>
    <property type="evidence" value="ECO:0007669"/>
    <property type="project" value="InterPro"/>
</dbReference>
<dbReference type="GO" id="GO:0019843">
    <property type="term" value="F:rRNA binding"/>
    <property type="evidence" value="ECO:0007669"/>
    <property type="project" value="UniProtKB-UniRule"/>
</dbReference>
<dbReference type="GO" id="GO:0003735">
    <property type="term" value="F:structural constituent of ribosome"/>
    <property type="evidence" value="ECO:0007669"/>
    <property type="project" value="InterPro"/>
</dbReference>
<dbReference type="GO" id="GO:0006412">
    <property type="term" value="P:translation"/>
    <property type="evidence" value="ECO:0007669"/>
    <property type="project" value="UniProtKB-UniRule"/>
</dbReference>
<dbReference type="FunFam" id="3.30.160.20:FF:000001">
    <property type="entry name" value="30S ribosomal protein S5"/>
    <property type="match status" value="1"/>
</dbReference>
<dbReference type="FunFam" id="3.30.230.10:FF:000002">
    <property type="entry name" value="30S ribosomal protein S5"/>
    <property type="match status" value="1"/>
</dbReference>
<dbReference type="Gene3D" id="3.30.160.20">
    <property type="match status" value="1"/>
</dbReference>
<dbReference type="Gene3D" id="3.30.230.10">
    <property type="match status" value="1"/>
</dbReference>
<dbReference type="HAMAP" id="MF_01307_B">
    <property type="entry name" value="Ribosomal_uS5_B"/>
    <property type="match status" value="1"/>
</dbReference>
<dbReference type="InterPro" id="IPR020568">
    <property type="entry name" value="Ribosomal_Su5_D2-typ_SF"/>
</dbReference>
<dbReference type="InterPro" id="IPR000851">
    <property type="entry name" value="Ribosomal_uS5"/>
</dbReference>
<dbReference type="InterPro" id="IPR005712">
    <property type="entry name" value="Ribosomal_uS5_bac-type"/>
</dbReference>
<dbReference type="InterPro" id="IPR005324">
    <property type="entry name" value="Ribosomal_uS5_C"/>
</dbReference>
<dbReference type="InterPro" id="IPR013810">
    <property type="entry name" value="Ribosomal_uS5_N"/>
</dbReference>
<dbReference type="InterPro" id="IPR018192">
    <property type="entry name" value="Ribosomal_uS5_N_CS"/>
</dbReference>
<dbReference type="InterPro" id="IPR014721">
    <property type="entry name" value="Ribsml_uS5_D2-typ_fold_subgr"/>
</dbReference>
<dbReference type="NCBIfam" id="TIGR01021">
    <property type="entry name" value="rpsE_bact"/>
    <property type="match status" value="1"/>
</dbReference>
<dbReference type="PANTHER" id="PTHR48277">
    <property type="entry name" value="MITOCHONDRIAL RIBOSOMAL PROTEIN S5"/>
    <property type="match status" value="1"/>
</dbReference>
<dbReference type="PANTHER" id="PTHR48277:SF1">
    <property type="entry name" value="MITOCHONDRIAL RIBOSOMAL PROTEIN S5"/>
    <property type="match status" value="1"/>
</dbReference>
<dbReference type="Pfam" id="PF00333">
    <property type="entry name" value="Ribosomal_S5"/>
    <property type="match status" value="1"/>
</dbReference>
<dbReference type="Pfam" id="PF03719">
    <property type="entry name" value="Ribosomal_S5_C"/>
    <property type="match status" value="1"/>
</dbReference>
<dbReference type="SUPFAM" id="SSF54768">
    <property type="entry name" value="dsRNA-binding domain-like"/>
    <property type="match status" value="1"/>
</dbReference>
<dbReference type="SUPFAM" id="SSF54211">
    <property type="entry name" value="Ribosomal protein S5 domain 2-like"/>
    <property type="match status" value="1"/>
</dbReference>
<dbReference type="PROSITE" id="PS00585">
    <property type="entry name" value="RIBOSOMAL_S5"/>
    <property type="match status" value="1"/>
</dbReference>
<dbReference type="PROSITE" id="PS50881">
    <property type="entry name" value="S5_DSRBD"/>
    <property type="match status" value="1"/>
</dbReference>
<gene>
    <name evidence="1" type="primary">rpsE</name>
    <name type="ordered locus">EcE24377A_3786</name>
</gene>
<reference key="1">
    <citation type="journal article" date="2008" name="J. Bacteriol.">
        <title>The pangenome structure of Escherichia coli: comparative genomic analysis of E. coli commensal and pathogenic isolates.</title>
        <authorList>
            <person name="Rasko D.A."/>
            <person name="Rosovitz M.J."/>
            <person name="Myers G.S.A."/>
            <person name="Mongodin E.F."/>
            <person name="Fricke W.F."/>
            <person name="Gajer P."/>
            <person name="Crabtree J."/>
            <person name="Sebaihia M."/>
            <person name="Thomson N.R."/>
            <person name="Chaudhuri R."/>
            <person name="Henderson I.R."/>
            <person name="Sperandio V."/>
            <person name="Ravel J."/>
        </authorList>
    </citation>
    <scope>NUCLEOTIDE SEQUENCE [LARGE SCALE GENOMIC DNA]</scope>
    <source>
        <strain>E24377A / ETEC</strain>
    </source>
</reference>
<name>RS5_ECO24</name>